<evidence type="ECO:0000250" key="1">
    <source>
        <dbReference type="UniProtKB" id="E9QG68"/>
    </source>
</evidence>
<evidence type="ECO:0000250" key="2">
    <source>
        <dbReference type="UniProtKB" id="Q8K387"/>
    </source>
</evidence>
<evidence type="ECO:0000255" key="3">
    <source>
        <dbReference type="PROSITE-ProRule" id="PRU00502"/>
    </source>
</evidence>
<evidence type="ECO:0000255" key="4">
    <source>
        <dbReference type="PROSITE-ProRule" id="PRU10092"/>
    </source>
</evidence>
<evidence type="ECO:0000255" key="5">
    <source>
        <dbReference type="PROSITE-ProRule" id="PRU10093"/>
    </source>
</evidence>
<evidence type="ECO:0000256" key="6">
    <source>
        <dbReference type="SAM" id="MobiDB-lite"/>
    </source>
</evidence>
<evidence type="ECO:0000269" key="7">
    <source>
    </source>
</evidence>
<evidence type="ECO:0000269" key="8">
    <source>
    </source>
</evidence>
<evidence type="ECO:0000269" key="9">
    <source>
    </source>
</evidence>
<evidence type="ECO:0000269" key="10">
    <source>
    </source>
</evidence>
<evidence type="ECO:0000269" key="11">
    <source>
    </source>
</evidence>
<evidence type="ECO:0000269" key="12">
    <source>
    </source>
</evidence>
<evidence type="ECO:0000303" key="13">
    <source>
    </source>
</evidence>
<evidence type="ECO:0000303" key="14">
    <source>
    </source>
</evidence>
<evidence type="ECO:0000305" key="15"/>
<organism>
    <name type="scientific">Homo sapiens</name>
    <name type="common">Human</name>
    <dbReference type="NCBI Taxonomy" id="9606"/>
    <lineage>
        <taxon>Eukaryota</taxon>
        <taxon>Metazoa</taxon>
        <taxon>Chordata</taxon>
        <taxon>Craniata</taxon>
        <taxon>Vertebrata</taxon>
        <taxon>Euteleostomi</taxon>
        <taxon>Mammalia</taxon>
        <taxon>Eutheria</taxon>
        <taxon>Euarchontoglires</taxon>
        <taxon>Primates</taxon>
        <taxon>Haplorrhini</taxon>
        <taxon>Catarrhini</taxon>
        <taxon>Hominidae</taxon>
        <taxon>Homo</taxon>
    </lineage>
</organism>
<protein>
    <recommendedName>
        <fullName>Ubiquitin carboxyl-terminal hydrolase 45</fullName>
        <ecNumber evidence="10 11">3.4.19.12</ecNumber>
    </recommendedName>
    <alternativeName>
        <fullName>Deubiquitinating enzyme 45</fullName>
    </alternativeName>
    <alternativeName>
        <fullName>Ubiquitin thioesterase 45</fullName>
    </alternativeName>
    <alternativeName>
        <fullName>Ubiquitin-specific-processing protease 45</fullName>
    </alternativeName>
</protein>
<sequence length="814" mass="91733">MRVKDPTKALPEKAKRSKRPTVPHDEDSSDDIAVGLTCQHVSHAISVNHVKRAIAENLWSVCSECLKERRFYDGQLVLTSDIWLCLKCGFQGCGKNSESQHSLKHFKSSRTEPHCIIINLSTWIIWCYECDEKLSTHCNKKVLAQIVDFLQKHASKTQTSAFSRIMKLCEEKCETDEIQKGGKCRNLSVRGITNLGNTCFFNAVMQNLAQTYTLTDLMNEIKESSTKLKIFPSSDSQLDPLVVELSRPGPLTSALFLFLHSMKETEKGPLSPKVLFNQLCQKAPRFKDFQQQDSQELLHYLLDAVRTEETKRIQASILKAFNNPTTKTADDETRKKVKAYGKEGVKMNFIDRIFIGELTSTVMCEECANISTVKDPFIDISLPIIEERVSKPLLWGRMNKYRSLRETDHDRYSGNVTIENIHQPRAAKKHSSSKDKSQLIHDRKCIRKLSSGETVTYQKNENLEMNGDSLMFASLMNSESRLNESPTDDSEKEASHSESNVDADSEPSESESASKQTGLFRSSSGSGVQPDGPLYPLSAGKLLYTKETDSGDKEMAEAISELRLSSTVTGDQDFDRENQPLNISNNLCFLEGKHLRSYSPQNAFQTLSQSYITTSKECSIQSCLYQFTSMELLMGNNKLLCENCTKNKQKYQEETSFAEKKVEGVYTNARKQLLISAVPAVLILHLKRFHQAGLSLRKVNRHVDFPLMLDLAPFCSATCKNASVGDKVLYGLYGIVEHSGSMREGHYTAYVKVRTPSRKLSEHNTKKKNVPGLKAADNESAGQWVHVSDTYLQVVPESRALSAQAYLLFYERVL</sequence>
<gene>
    <name type="primary">USP45</name>
</gene>
<dbReference type="EC" id="3.4.19.12" evidence="10 11"/>
<dbReference type="EMBL" id="AJ583819">
    <property type="protein sequence ID" value="CAE47746.2"/>
    <property type="molecule type" value="mRNA"/>
</dbReference>
<dbReference type="EMBL" id="AL713747">
    <property type="protein sequence ID" value="CAD89915.1"/>
    <property type="molecule type" value="mRNA"/>
</dbReference>
<dbReference type="EMBL" id="AL832030">
    <property type="protein sequence ID" value="CAD91148.1"/>
    <property type="molecule type" value="mRNA"/>
</dbReference>
<dbReference type="EMBL" id="AL137784">
    <property type="status" value="NOT_ANNOTATED_CDS"/>
    <property type="molecule type" value="Genomic_DNA"/>
</dbReference>
<dbReference type="EMBL" id="AL513550">
    <property type="status" value="NOT_ANNOTATED_CDS"/>
    <property type="molecule type" value="Genomic_DNA"/>
</dbReference>
<dbReference type="EMBL" id="BC005991">
    <property type="protein sequence ID" value="AAH05991.1"/>
    <property type="molecule type" value="mRNA"/>
</dbReference>
<dbReference type="EMBL" id="BC150648">
    <property type="protein sequence ID" value="AAI50649.1"/>
    <property type="molecule type" value="mRNA"/>
</dbReference>
<dbReference type="EMBL" id="BC157838">
    <property type="protein sequence ID" value="AAI57839.1"/>
    <property type="molecule type" value="mRNA"/>
</dbReference>
<dbReference type="CCDS" id="CCDS34501.1">
    <molecule id="Q70EL2-1"/>
</dbReference>
<dbReference type="CCDS" id="CCDS87419.1">
    <molecule id="Q70EL2-2"/>
</dbReference>
<dbReference type="RefSeq" id="NP_001073950.1">
    <molecule id="Q70EL2-1"/>
    <property type="nucleotide sequence ID" value="NM_001080481.3"/>
</dbReference>
<dbReference type="RefSeq" id="NP_001332950.1">
    <molecule id="Q70EL2-1"/>
    <property type="nucleotide sequence ID" value="NM_001346021.3"/>
</dbReference>
<dbReference type="RefSeq" id="NP_001332951.1">
    <molecule id="Q70EL2-1"/>
    <property type="nucleotide sequence ID" value="NM_001346022.3"/>
</dbReference>
<dbReference type="RefSeq" id="XP_005267227.1">
    <molecule id="Q70EL2-1"/>
    <property type="nucleotide sequence ID" value="XM_005267170.5"/>
</dbReference>
<dbReference type="RefSeq" id="XP_047275378.1">
    <molecule id="Q70EL2-1"/>
    <property type="nucleotide sequence ID" value="XM_047419422.1"/>
</dbReference>
<dbReference type="BioGRID" id="124430">
    <property type="interactions" value="39"/>
</dbReference>
<dbReference type="CORUM" id="Q70EL2"/>
<dbReference type="FunCoup" id="Q70EL2">
    <property type="interactions" value="3113"/>
</dbReference>
<dbReference type="IntAct" id="Q70EL2">
    <property type="interactions" value="31"/>
</dbReference>
<dbReference type="STRING" id="9606.ENSP00000333376"/>
<dbReference type="BindingDB" id="Q70EL2"/>
<dbReference type="ChEMBL" id="CHEMBL4630841"/>
<dbReference type="MEROPS" id="C19.064"/>
<dbReference type="GlyGen" id="Q70EL2">
    <property type="glycosylation" value="1 site, 1 O-linked glycan (1 site)"/>
</dbReference>
<dbReference type="iPTMnet" id="Q70EL2"/>
<dbReference type="PhosphoSitePlus" id="Q70EL2"/>
<dbReference type="BioMuta" id="USP45"/>
<dbReference type="DMDM" id="296453002"/>
<dbReference type="jPOST" id="Q70EL2"/>
<dbReference type="MassIVE" id="Q70EL2"/>
<dbReference type="PaxDb" id="9606-ENSP00000333376"/>
<dbReference type="PeptideAtlas" id="Q70EL2"/>
<dbReference type="ProteomicsDB" id="68545">
    <molecule id="Q70EL2-1"/>
</dbReference>
<dbReference type="ProteomicsDB" id="68546">
    <molecule id="Q70EL2-2"/>
</dbReference>
<dbReference type="ProteomicsDB" id="68547">
    <molecule id="Q70EL2-3"/>
</dbReference>
<dbReference type="Antibodypedia" id="32010">
    <property type="antibodies" value="175 antibodies from 25 providers"/>
</dbReference>
<dbReference type="DNASU" id="85015"/>
<dbReference type="Ensembl" id="ENST00000327681.10">
    <molecule id="Q70EL2-1"/>
    <property type="protein sequence ID" value="ENSP00000333376.6"/>
    <property type="gene ID" value="ENSG00000123552.18"/>
</dbReference>
<dbReference type="Ensembl" id="ENST00000500704.7">
    <molecule id="Q70EL2-1"/>
    <property type="protein sequence ID" value="ENSP00000424372.1"/>
    <property type="gene ID" value="ENSG00000123552.18"/>
</dbReference>
<dbReference type="GeneID" id="85015"/>
<dbReference type="KEGG" id="hsa:85015"/>
<dbReference type="MANE-Select" id="ENST00000500704.7">
    <property type="protein sequence ID" value="ENSP00000424372.1"/>
    <property type="RefSeq nucleotide sequence ID" value="NM_001346022.3"/>
    <property type="RefSeq protein sequence ID" value="NP_001332951.1"/>
</dbReference>
<dbReference type="UCSC" id="uc003ppx.4">
    <molecule id="Q70EL2-1"/>
    <property type="organism name" value="human"/>
</dbReference>
<dbReference type="AGR" id="HGNC:20080"/>
<dbReference type="CTD" id="85015"/>
<dbReference type="DisGeNET" id="85015"/>
<dbReference type="GeneCards" id="USP45"/>
<dbReference type="HGNC" id="HGNC:20080">
    <property type="gene designation" value="USP45"/>
</dbReference>
<dbReference type="HPA" id="ENSG00000123552">
    <property type="expression patterns" value="Low tissue specificity"/>
</dbReference>
<dbReference type="MalaCards" id="USP45"/>
<dbReference type="MIM" id="618439">
    <property type="type" value="gene"/>
</dbReference>
<dbReference type="MIM" id="618513">
    <property type="type" value="phenotype"/>
</dbReference>
<dbReference type="neXtProt" id="NX_Q70EL2"/>
<dbReference type="OpenTargets" id="ENSG00000123552"/>
<dbReference type="Orphanet" id="65">
    <property type="disease" value="Leber congenital amaurosis"/>
</dbReference>
<dbReference type="PharmGKB" id="PA134889604"/>
<dbReference type="VEuPathDB" id="HostDB:ENSG00000123552"/>
<dbReference type="eggNOG" id="KOG1873">
    <property type="taxonomic scope" value="Eukaryota"/>
</dbReference>
<dbReference type="GeneTree" id="ENSGT00940000157719"/>
<dbReference type="InParanoid" id="Q70EL2"/>
<dbReference type="OMA" id="AVGQWVY"/>
<dbReference type="OrthoDB" id="2020758at2759"/>
<dbReference type="PAN-GO" id="Q70EL2">
    <property type="GO annotations" value="0 GO annotations based on evolutionary models"/>
</dbReference>
<dbReference type="PhylomeDB" id="Q70EL2"/>
<dbReference type="TreeFam" id="TF326075"/>
<dbReference type="PathwayCommons" id="Q70EL2"/>
<dbReference type="Reactome" id="R-HSA-5696395">
    <property type="pathway name" value="Formation of Incision Complex in GG-NER"/>
</dbReference>
<dbReference type="SignaLink" id="Q70EL2"/>
<dbReference type="SIGNOR" id="Q70EL2"/>
<dbReference type="BioGRID-ORCS" id="85015">
    <property type="hits" value="15 hits in 1203 CRISPR screens"/>
</dbReference>
<dbReference type="ChiTaRS" id="USP45">
    <property type="organism name" value="human"/>
</dbReference>
<dbReference type="GenomeRNAi" id="85015"/>
<dbReference type="Pharos" id="Q70EL2">
    <property type="development level" value="Tbio"/>
</dbReference>
<dbReference type="PRO" id="PR:Q70EL2"/>
<dbReference type="Proteomes" id="UP000005640">
    <property type="component" value="Chromosome 6"/>
</dbReference>
<dbReference type="RNAct" id="Q70EL2">
    <property type="molecule type" value="protein"/>
</dbReference>
<dbReference type="Bgee" id="ENSG00000123552">
    <property type="expression patterns" value="Expressed in calcaneal tendon and 155 other cell types or tissues"/>
</dbReference>
<dbReference type="ExpressionAtlas" id="Q70EL2">
    <property type="expression patterns" value="baseline and differential"/>
</dbReference>
<dbReference type="GO" id="GO:0005737">
    <property type="term" value="C:cytoplasm"/>
    <property type="evidence" value="ECO:0000314"/>
    <property type="project" value="MGI"/>
</dbReference>
<dbReference type="GO" id="GO:0005829">
    <property type="term" value="C:cytosol"/>
    <property type="evidence" value="ECO:0000314"/>
    <property type="project" value="HPA"/>
</dbReference>
<dbReference type="GO" id="GO:0005654">
    <property type="term" value="C:nucleoplasm"/>
    <property type="evidence" value="ECO:0000314"/>
    <property type="project" value="HPA"/>
</dbReference>
<dbReference type="GO" id="GO:0005634">
    <property type="term" value="C:nucleus"/>
    <property type="evidence" value="ECO:0000314"/>
    <property type="project" value="MGI"/>
</dbReference>
<dbReference type="GO" id="GO:0001917">
    <property type="term" value="C:photoreceptor inner segment"/>
    <property type="evidence" value="ECO:0000314"/>
    <property type="project" value="UniProtKB"/>
</dbReference>
<dbReference type="GO" id="GO:0004843">
    <property type="term" value="F:cysteine-type deubiquitinase activity"/>
    <property type="evidence" value="ECO:0000314"/>
    <property type="project" value="FlyBase"/>
</dbReference>
<dbReference type="GO" id="GO:0008270">
    <property type="term" value="F:zinc ion binding"/>
    <property type="evidence" value="ECO:0007669"/>
    <property type="project" value="UniProtKB-KW"/>
</dbReference>
<dbReference type="GO" id="GO:0016477">
    <property type="term" value="P:cell migration"/>
    <property type="evidence" value="ECO:0000315"/>
    <property type="project" value="UniProtKB"/>
</dbReference>
<dbReference type="GO" id="GO:0006281">
    <property type="term" value="P:DNA repair"/>
    <property type="evidence" value="ECO:0000315"/>
    <property type="project" value="MGI"/>
</dbReference>
<dbReference type="GO" id="GO:0070911">
    <property type="term" value="P:global genome nucleotide-excision repair"/>
    <property type="evidence" value="ECO:0000304"/>
    <property type="project" value="Reactome"/>
</dbReference>
<dbReference type="GO" id="GO:0003407">
    <property type="term" value="P:neural retina development"/>
    <property type="evidence" value="ECO:0000250"/>
    <property type="project" value="UniProtKB"/>
</dbReference>
<dbReference type="GO" id="GO:0045494">
    <property type="term" value="P:photoreceptor cell maintenance"/>
    <property type="evidence" value="ECO:0000250"/>
    <property type="project" value="UniProtKB"/>
</dbReference>
<dbReference type="GO" id="GO:0016579">
    <property type="term" value="P:protein deubiquitination"/>
    <property type="evidence" value="ECO:0000315"/>
    <property type="project" value="MGI"/>
</dbReference>
<dbReference type="GO" id="GO:0006508">
    <property type="term" value="P:proteolysis"/>
    <property type="evidence" value="ECO:0007669"/>
    <property type="project" value="UniProtKB-KW"/>
</dbReference>
<dbReference type="CDD" id="cd02667">
    <property type="entry name" value="Peptidase_C19K"/>
    <property type="match status" value="1"/>
</dbReference>
<dbReference type="FunFam" id="3.30.40.10:FF:000147">
    <property type="entry name" value="Ubiquitin carboxyl-terminal hydrolase 16"/>
    <property type="match status" value="1"/>
</dbReference>
<dbReference type="FunFam" id="3.90.70.10:FF:000102">
    <property type="entry name" value="Ubiquitinyl hydrolase 1"/>
    <property type="match status" value="1"/>
</dbReference>
<dbReference type="FunFam" id="3.90.70.10:FF:000129">
    <property type="entry name" value="Ubiquitinyl hydrolase 1"/>
    <property type="match status" value="1"/>
</dbReference>
<dbReference type="Gene3D" id="3.90.70.10">
    <property type="entry name" value="Cysteine proteinases"/>
    <property type="match status" value="2"/>
</dbReference>
<dbReference type="Gene3D" id="3.30.40.10">
    <property type="entry name" value="Zinc/RING finger domain, C3HC4 (zinc finger)"/>
    <property type="match status" value="1"/>
</dbReference>
<dbReference type="InterPro" id="IPR038765">
    <property type="entry name" value="Papain-like_cys_pep_sf"/>
</dbReference>
<dbReference type="InterPro" id="IPR001394">
    <property type="entry name" value="Peptidase_C19_UCH"/>
</dbReference>
<dbReference type="InterPro" id="IPR050185">
    <property type="entry name" value="Ub_carboxyl-term_hydrolase"/>
</dbReference>
<dbReference type="InterPro" id="IPR018200">
    <property type="entry name" value="USP_CS"/>
</dbReference>
<dbReference type="InterPro" id="IPR028889">
    <property type="entry name" value="USP_dom"/>
</dbReference>
<dbReference type="InterPro" id="IPR013083">
    <property type="entry name" value="Znf_RING/FYVE/PHD"/>
</dbReference>
<dbReference type="InterPro" id="IPR001607">
    <property type="entry name" value="Znf_UBP"/>
</dbReference>
<dbReference type="PANTHER" id="PTHR21646">
    <property type="entry name" value="UBIQUITIN CARBOXYL-TERMINAL HYDROLASE"/>
    <property type="match status" value="1"/>
</dbReference>
<dbReference type="PANTHER" id="PTHR21646:SF34">
    <property type="entry name" value="UBIQUITIN CARBOXYL-TERMINAL HYDROLASE 45"/>
    <property type="match status" value="1"/>
</dbReference>
<dbReference type="Pfam" id="PF00443">
    <property type="entry name" value="UCH"/>
    <property type="match status" value="1"/>
</dbReference>
<dbReference type="Pfam" id="PF02148">
    <property type="entry name" value="zf-UBP"/>
    <property type="match status" value="1"/>
</dbReference>
<dbReference type="SUPFAM" id="SSF54001">
    <property type="entry name" value="Cysteine proteinases"/>
    <property type="match status" value="1"/>
</dbReference>
<dbReference type="SUPFAM" id="SSF57850">
    <property type="entry name" value="RING/U-box"/>
    <property type="match status" value="1"/>
</dbReference>
<dbReference type="PROSITE" id="PS00972">
    <property type="entry name" value="USP_1"/>
    <property type="match status" value="1"/>
</dbReference>
<dbReference type="PROSITE" id="PS00973">
    <property type="entry name" value="USP_2"/>
    <property type="match status" value="1"/>
</dbReference>
<dbReference type="PROSITE" id="PS50235">
    <property type="entry name" value="USP_3"/>
    <property type="match status" value="1"/>
</dbReference>
<dbReference type="PROSITE" id="PS50271">
    <property type="entry name" value="ZF_UBP"/>
    <property type="match status" value="1"/>
</dbReference>
<feature type="chain" id="PRO_0000280561" description="Ubiquitin carboxyl-terminal hydrolase 45">
    <location>
        <begin position="1"/>
        <end position="814"/>
    </location>
</feature>
<feature type="domain" description="USP">
    <location>
        <begin position="190"/>
        <end position="813"/>
    </location>
</feature>
<feature type="zinc finger region" description="UBP-type" evidence="3">
    <location>
        <begin position="36"/>
        <end position="153"/>
    </location>
</feature>
<feature type="region of interest" description="Interaction with ERCC1" evidence="10">
    <location>
        <begin position="1"/>
        <end position="62"/>
    </location>
</feature>
<feature type="region of interest" description="Disordered" evidence="6">
    <location>
        <begin position="1"/>
        <end position="28"/>
    </location>
</feature>
<feature type="region of interest" description="Disordered" evidence="6">
    <location>
        <begin position="418"/>
        <end position="443"/>
    </location>
</feature>
<feature type="region of interest" description="Disordered" evidence="6">
    <location>
        <begin position="479"/>
        <end position="533"/>
    </location>
</feature>
<feature type="compositionally biased region" description="Basic and acidic residues" evidence="6">
    <location>
        <begin position="1"/>
        <end position="14"/>
    </location>
</feature>
<feature type="compositionally biased region" description="Basic and acidic residues" evidence="6">
    <location>
        <begin position="432"/>
        <end position="443"/>
    </location>
</feature>
<feature type="compositionally biased region" description="Polar residues" evidence="6">
    <location>
        <begin position="515"/>
        <end position="527"/>
    </location>
</feature>
<feature type="active site" description="Nucleophile" evidence="4 5">
    <location>
        <position position="199"/>
    </location>
</feature>
<feature type="active site" description="Proton acceptor" evidence="4 5">
    <location>
        <position position="746"/>
    </location>
</feature>
<feature type="binding site" evidence="3">
    <location>
        <position position="38"/>
    </location>
    <ligand>
        <name>Zn(2+)</name>
        <dbReference type="ChEBI" id="CHEBI:29105"/>
        <label>1</label>
    </ligand>
</feature>
<feature type="binding site" evidence="3">
    <location>
        <position position="40"/>
    </location>
    <ligand>
        <name>Zn(2+)</name>
        <dbReference type="ChEBI" id="CHEBI:29105"/>
        <label>1</label>
    </ligand>
</feature>
<feature type="binding site" evidence="3">
    <location>
        <position position="62"/>
    </location>
    <ligand>
        <name>Zn(2+)</name>
        <dbReference type="ChEBI" id="CHEBI:29105"/>
        <label>2</label>
    </ligand>
</feature>
<feature type="binding site" evidence="3">
    <location>
        <position position="65"/>
    </location>
    <ligand>
        <name>Zn(2+)</name>
        <dbReference type="ChEBI" id="CHEBI:29105"/>
        <label>2</label>
    </ligand>
</feature>
<feature type="binding site" evidence="3">
    <location>
        <position position="85"/>
    </location>
    <ligand>
        <name>Zn(2+)</name>
        <dbReference type="ChEBI" id="CHEBI:29105"/>
        <label>3</label>
    </ligand>
</feature>
<feature type="binding site" evidence="3">
    <location>
        <position position="88"/>
    </location>
    <ligand>
        <name>Zn(2+)</name>
        <dbReference type="ChEBI" id="CHEBI:29105"/>
        <label>3</label>
    </ligand>
</feature>
<feature type="binding site" evidence="3">
    <location>
        <position position="93"/>
    </location>
    <ligand>
        <name>Zn(2+)</name>
        <dbReference type="ChEBI" id="CHEBI:29105"/>
        <label>2</label>
    </ligand>
</feature>
<feature type="binding site" evidence="3">
    <location>
        <position position="101"/>
    </location>
    <ligand>
        <name>Zn(2+)</name>
        <dbReference type="ChEBI" id="CHEBI:29105"/>
        <label>2</label>
    </ligand>
</feature>
<feature type="binding site" evidence="3">
    <location>
        <position position="105"/>
    </location>
    <ligand>
        <name>Zn(2+)</name>
        <dbReference type="ChEBI" id="CHEBI:29105"/>
        <label>3</label>
    </ligand>
</feature>
<feature type="binding site" evidence="3">
    <location>
        <position position="114"/>
    </location>
    <ligand>
        <name>Zn(2+)</name>
        <dbReference type="ChEBI" id="CHEBI:29105"/>
        <label>3</label>
    </ligand>
</feature>
<feature type="binding site" evidence="3">
    <location>
        <position position="127"/>
    </location>
    <ligand>
        <name>Zn(2+)</name>
        <dbReference type="ChEBI" id="CHEBI:29105"/>
        <label>1</label>
    </ligand>
</feature>
<feature type="binding site" evidence="3">
    <location>
        <position position="130"/>
    </location>
    <ligand>
        <name>Zn(2+)</name>
        <dbReference type="ChEBI" id="CHEBI:29105"/>
        <label>1</label>
    </ligand>
</feature>
<feature type="modified residue" description="Phosphoserine" evidence="2">
    <location>
        <position position="28"/>
    </location>
</feature>
<feature type="modified residue" description="Phosphoserine" evidence="2">
    <location>
        <position position="29"/>
    </location>
</feature>
<feature type="modified residue" description="Phosphoserine" evidence="2">
    <location>
        <position position="508"/>
    </location>
</feature>
<feature type="modified residue" description="Phosphoserine" evidence="2">
    <location>
        <position position="526"/>
    </location>
</feature>
<feature type="splice variant" id="VSP_023789" description="In isoform 3." evidence="14">
    <location>
        <begin position="1"/>
        <end position="262"/>
    </location>
</feature>
<feature type="splice variant" id="VSP_023790" description="In isoform 3." evidence="14">
    <original>KETEKGPLSPKVLFNQLCQK</original>
    <variation>MRSKKVVQNSRFFLPQTLSW</variation>
    <location>
        <begin position="263"/>
        <end position="282"/>
    </location>
</feature>
<feature type="splice variant" id="VSP_023791" description="In isoform 2." evidence="13">
    <original>APRFKDF</original>
    <variation>RVHLHLI</variation>
    <location>
        <begin position="283"/>
        <end position="289"/>
    </location>
</feature>
<feature type="splice variant" id="VSP_023792" description="In isoform 2." evidence="13">
    <location>
        <begin position="290"/>
        <end position="814"/>
    </location>
</feature>
<feature type="splice variant" id="VSP_023793" description="In isoform 3." evidence="14">
    <location>
        <begin position="312"/>
        <end position="369"/>
    </location>
</feature>
<feature type="sequence variant" id="VAR_031167" description="In dbSNP:rs7744845." evidence="8">
    <original>K</original>
    <variation>E</variation>
    <location>
        <position position="67"/>
    </location>
</feature>
<feature type="sequence variant" id="VAR_083031" description="In LCA19; uncertain significance." evidence="12">
    <original>R</original>
    <variation>Q</variation>
    <location>
        <position position="312"/>
    </location>
</feature>
<feature type="sequence variant" id="VAR_060663" description="In dbSNP:rs41288947." evidence="8">
    <original>R</original>
    <variation>T</variation>
    <location>
        <position position="521"/>
    </location>
</feature>
<feature type="sequence variant" id="VAR_083032" description="In LCA19; uncertain significance." evidence="12">
    <location>
        <begin position="546"/>
        <end position="814"/>
    </location>
</feature>
<feature type="sequence variant" id="VAR_031168" description="In dbSNP:rs6570065." evidence="8 9">
    <original>N</original>
    <variation>S</variation>
    <location>
        <position position="778"/>
    </location>
</feature>
<feature type="mutagenesis site" description="Significant reduction in interaction with ERCC1. Complete loss of ability to interact with and deubiquitinate ERCC1; when associated with A-26." evidence="10">
    <original>D</original>
    <variation>A</variation>
    <location>
        <position position="25"/>
    </location>
</feature>
<feature type="mutagenesis site" description="Significant reduction in interaction with ERCC1. Complete loss of ability to interact with and deubiquitinate ERCC1; when associated with A-25." evidence="10">
    <original>E</original>
    <variation>A</variation>
    <location>
        <position position="26"/>
    </location>
</feature>
<feature type="mutagenesis site" description="Significant reduction in interaction with ERCC1." evidence="10">
    <original>D</original>
    <variation>A</variation>
    <location>
        <position position="27"/>
    </location>
</feature>
<feature type="mutagenesis site" description="Loss of protein expression." evidence="10">
    <original>T</original>
    <variation>A</variation>
    <location>
        <position position="37"/>
    </location>
</feature>
<feature type="mutagenesis site" description="Catalytically inactive. Loss of ability to deubiquitinate ERCC1. Loss of interaction with SPDL1 and ability to deubiquitinate SPDL1." evidence="10 11">
    <original>C</original>
    <variation>A</variation>
    <location>
        <position position="199"/>
    </location>
</feature>
<feature type="sequence conflict" description="In Ref. 2; CAD91148." evidence="15" ref="2">
    <original>A</original>
    <variation>V</variation>
    <location>
        <position position="603"/>
    </location>
</feature>
<feature type="sequence conflict" description="In Ref. 1; CAE47746." evidence="15" ref="1">
    <original>Q</original>
    <variation>K</variation>
    <location>
        <position position="691"/>
    </location>
</feature>
<feature type="sequence conflict" description="In Ref. 2; CAD89915." evidence="15" ref="2">
    <original>D</original>
    <variation>G</variation>
    <location>
        <position position="726"/>
    </location>
</feature>
<proteinExistence type="evidence at protein level"/>
<keyword id="KW-0025">Alternative splicing</keyword>
<keyword id="KW-0963">Cytoplasm</keyword>
<keyword id="KW-0225">Disease variant</keyword>
<keyword id="KW-0378">Hydrolase</keyword>
<keyword id="KW-0901">Leber congenital amaurosis</keyword>
<keyword id="KW-0479">Metal-binding</keyword>
<keyword id="KW-0539">Nucleus</keyword>
<keyword id="KW-0597">Phosphoprotein</keyword>
<keyword id="KW-0645">Protease</keyword>
<keyword id="KW-1267">Proteomics identification</keyword>
<keyword id="KW-1185">Reference proteome</keyword>
<keyword id="KW-0788">Thiol protease</keyword>
<keyword id="KW-0833">Ubl conjugation pathway</keyword>
<keyword id="KW-0862">Zinc</keyword>
<keyword id="KW-0863">Zinc-finger</keyword>
<name>UBP45_HUMAN</name>
<comment type="function">
    <text evidence="1 10 11 12">Catalyzes the deubiquitination of SPDL1 (PubMed:30258100). Plays a role in the repair of UV-induced DNA damage via deubiquitination of ERCC1, promoting its recruitment to DNA damage sites (PubMed:25538220). May be involved in the maintenance of photoreceptor function (PubMed:30573563). May play a role in normal retinal development (By similarity). Plays a role in cell migration (PubMed:30258100).</text>
</comment>
<comment type="catalytic activity">
    <reaction evidence="7 10 11">
        <text>Thiol-dependent hydrolysis of ester, thioester, amide, peptide and isopeptide bonds formed by the C-terminal Gly of ubiquitin (a 76-residue protein attached to proteins as an intracellular targeting signal).</text>
        <dbReference type="EC" id="3.4.19.12"/>
    </reaction>
</comment>
<comment type="subunit">
    <text evidence="10 11">Interacts with ERCC1 (PubMed:25538220). The catalytically active form interacts with SPDL1 (PubMed:30258100).</text>
</comment>
<comment type="subcellular location">
    <subcellularLocation>
        <location evidence="12">Photoreceptor inner segment</location>
    </subcellularLocation>
    <subcellularLocation>
        <location evidence="10">Cytoplasm</location>
    </subcellularLocation>
    <subcellularLocation>
        <location evidence="10">Nucleus</location>
    </subcellularLocation>
</comment>
<comment type="alternative products">
    <event type="alternative splicing"/>
    <isoform>
        <id>Q70EL2-1</id>
        <name>1</name>
        <sequence type="displayed"/>
    </isoform>
    <isoform>
        <id>Q70EL2-2</id>
        <name>2</name>
        <sequence type="described" ref="VSP_023791 VSP_023792"/>
    </isoform>
    <isoform>
        <id>Q70EL2-3</id>
        <name>3</name>
        <sequence type="described" ref="VSP_023789 VSP_023790 VSP_023793"/>
    </isoform>
</comment>
<comment type="tissue specificity">
    <text evidence="7 12">Widely expressed. High expression is detected in the cerebellum. In the eye, it is expressed at high levels in the optic nerve, sclera and retina, with relatively low levels in the choroid, lens and retinal pigment epithelium (PubMed:30573563).</text>
</comment>
<comment type="disease" evidence="12">
    <disease id="DI-05621">
        <name>Leber congenital amaurosis 19</name>
        <acronym>LCA19</acronym>
        <description>A form of Leber congenital amaurosis, a severe dystrophy of the retina, typically becoming evident in the first years of life. Visual function is usually poor and often accompanied by nystagmus, sluggish or near-absent pupillary responses, photophobia, high hyperopia and keratoconus. LCA19 is an autosomal recessive form characterized by reduced vision in early childhood and severely reduced responses of both rods and cones.</description>
        <dbReference type="MIM" id="618513"/>
    </disease>
    <text>The disease may be caused by variants affecting the gene represented in this entry.</text>
</comment>
<comment type="miscellaneous">
    <molecule>Isoform 3</molecule>
    <text evidence="15">May be produced at very low levels due to a premature stop codon in the mRNA, leading to nonsense-mediated mRNA decay.</text>
</comment>
<comment type="similarity">
    <text evidence="15">Belongs to the peptidase C19 family.</text>
</comment>
<reference key="1">
    <citation type="journal article" date="2004" name="Biochem. Biophys. Res. Commun.">
        <title>Cloning and enzymatic analysis of 22 novel human ubiquitin-specific proteases.</title>
        <authorList>
            <person name="Quesada V."/>
            <person name="Diaz-Perales A."/>
            <person name="Gutierrez-Fernandez A."/>
            <person name="Garabaya C."/>
            <person name="Cal S."/>
            <person name="Lopez-Otin C."/>
        </authorList>
    </citation>
    <scope>NUCLEOTIDE SEQUENCE [MRNA] (ISOFORM 1)</scope>
    <scope>CATALYTIC ACTIVITY</scope>
    <scope>TISSUE SPECIFICITY</scope>
</reference>
<reference key="2">
    <citation type="journal article" date="2007" name="BMC Genomics">
        <title>The full-ORF clone resource of the German cDNA consortium.</title>
        <authorList>
            <person name="Bechtel S."/>
            <person name="Rosenfelder H."/>
            <person name="Duda A."/>
            <person name="Schmidt C.P."/>
            <person name="Ernst U."/>
            <person name="Wellenreuther R."/>
            <person name="Mehrle A."/>
            <person name="Schuster C."/>
            <person name="Bahr A."/>
            <person name="Bloecker H."/>
            <person name="Heubner D."/>
            <person name="Hoerlein A."/>
            <person name="Michel G."/>
            <person name="Wedler H."/>
            <person name="Koehrer K."/>
            <person name="Ottenwaelder B."/>
            <person name="Poustka A."/>
            <person name="Wiemann S."/>
            <person name="Schupp I."/>
        </authorList>
    </citation>
    <scope>NUCLEOTIDE SEQUENCE [LARGE SCALE MRNA] (ISOFORM 3)</scope>
    <scope>NUCLEOTIDE SEQUENCE [LARGE SCALE MRNA] OF 248-814 (ISOFORM 1)</scope>
    <scope>VARIANT SER-778</scope>
    <source>
        <tissue>Skeletal muscle</tissue>
    </source>
</reference>
<reference key="3">
    <citation type="journal article" date="2003" name="Nature">
        <title>The DNA sequence and analysis of human chromosome 6.</title>
        <authorList>
            <person name="Mungall A.J."/>
            <person name="Palmer S.A."/>
            <person name="Sims S.K."/>
            <person name="Edwards C.A."/>
            <person name="Ashurst J.L."/>
            <person name="Wilming L."/>
            <person name="Jones M.C."/>
            <person name="Horton R."/>
            <person name="Hunt S.E."/>
            <person name="Scott C.E."/>
            <person name="Gilbert J.G.R."/>
            <person name="Clamp M.E."/>
            <person name="Bethel G."/>
            <person name="Milne S."/>
            <person name="Ainscough R."/>
            <person name="Almeida J.P."/>
            <person name="Ambrose K.D."/>
            <person name="Andrews T.D."/>
            <person name="Ashwell R.I.S."/>
            <person name="Babbage A.K."/>
            <person name="Bagguley C.L."/>
            <person name="Bailey J."/>
            <person name="Banerjee R."/>
            <person name="Barker D.J."/>
            <person name="Barlow K.F."/>
            <person name="Bates K."/>
            <person name="Beare D.M."/>
            <person name="Beasley H."/>
            <person name="Beasley O."/>
            <person name="Bird C.P."/>
            <person name="Blakey S.E."/>
            <person name="Bray-Allen S."/>
            <person name="Brook J."/>
            <person name="Brown A.J."/>
            <person name="Brown J.Y."/>
            <person name="Burford D.C."/>
            <person name="Burrill W."/>
            <person name="Burton J."/>
            <person name="Carder C."/>
            <person name="Carter N.P."/>
            <person name="Chapman J.C."/>
            <person name="Clark S.Y."/>
            <person name="Clark G."/>
            <person name="Clee C.M."/>
            <person name="Clegg S."/>
            <person name="Cobley V."/>
            <person name="Collier R.E."/>
            <person name="Collins J.E."/>
            <person name="Colman L.K."/>
            <person name="Corby N.R."/>
            <person name="Coville G.J."/>
            <person name="Culley K.M."/>
            <person name="Dhami P."/>
            <person name="Davies J."/>
            <person name="Dunn M."/>
            <person name="Earthrowl M.E."/>
            <person name="Ellington A.E."/>
            <person name="Evans K.A."/>
            <person name="Faulkner L."/>
            <person name="Francis M.D."/>
            <person name="Frankish A."/>
            <person name="Frankland J."/>
            <person name="French L."/>
            <person name="Garner P."/>
            <person name="Garnett J."/>
            <person name="Ghori M.J."/>
            <person name="Gilby L.M."/>
            <person name="Gillson C.J."/>
            <person name="Glithero R.J."/>
            <person name="Grafham D.V."/>
            <person name="Grant M."/>
            <person name="Gribble S."/>
            <person name="Griffiths C."/>
            <person name="Griffiths M.N.D."/>
            <person name="Hall R."/>
            <person name="Halls K.S."/>
            <person name="Hammond S."/>
            <person name="Harley J.L."/>
            <person name="Hart E.A."/>
            <person name="Heath P.D."/>
            <person name="Heathcott R."/>
            <person name="Holmes S.J."/>
            <person name="Howden P.J."/>
            <person name="Howe K.L."/>
            <person name="Howell G.R."/>
            <person name="Huckle E."/>
            <person name="Humphray S.J."/>
            <person name="Humphries M.D."/>
            <person name="Hunt A.R."/>
            <person name="Johnson C.M."/>
            <person name="Joy A.A."/>
            <person name="Kay M."/>
            <person name="Keenan S.J."/>
            <person name="Kimberley A.M."/>
            <person name="King A."/>
            <person name="Laird G.K."/>
            <person name="Langford C."/>
            <person name="Lawlor S."/>
            <person name="Leongamornlert D.A."/>
            <person name="Leversha M."/>
            <person name="Lloyd C.R."/>
            <person name="Lloyd D.M."/>
            <person name="Loveland J.E."/>
            <person name="Lovell J."/>
            <person name="Martin S."/>
            <person name="Mashreghi-Mohammadi M."/>
            <person name="Maslen G.L."/>
            <person name="Matthews L."/>
            <person name="McCann O.T."/>
            <person name="McLaren S.J."/>
            <person name="McLay K."/>
            <person name="McMurray A."/>
            <person name="Moore M.J.F."/>
            <person name="Mullikin J.C."/>
            <person name="Niblett D."/>
            <person name="Nickerson T."/>
            <person name="Novik K.L."/>
            <person name="Oliver K."/>
            <person name="Overton-Larty E.K."/>
            <person name="Parker A."/>
            <person name="Patel R."/>
            <person name="Pearce A.V."/>
            <person name="Peck A.I."/>
            <person name="Phillimore B.J.C.T."/>
            <person name="Phillips S."/>
            <person name="Plumb R.W."/>
            <person name="Porter K.M."/>
            <person name="Ramsey Y."/>
            <person name="Ranby S.A."/>
            <person name="Rice C.M."/>
            <person name="Ross M.T."/>
            <person name="Searle S.M."/>
            <person name="Sehra H.K."/>
            <person name="Sheridan E."/>
            <person name="Skuce C.D."/>
            <person name="Smith S."/>
            <person name="Smith M."/>
            <person name="Spraggon L."/>
            <person name="Squares S.L."/>
            <person name="Steward C.A."/>
            <person name="Sycamore N."/>
            <person name="Tamlyn-Hall G."/>
            <person name="Tester J."/>
            <person name="Theaker A.J."/>
            <person name="Thomas D.W."/>
            <person name="Thorpe A."/>
            <person name="Tracey A."/>
            <person name="Tromans A."/>
            <person name="Tubby B."/>
            <person name="Wall M."/>
            <person name="Wallis J.M."/>
            <person name="West A.P."/>
            <person name="White S.S."/>
            <person name="Whitehead S.L."/>
            <person name="Whittaker H."/>
            <person name="Wild A."/>
            <person name="Willey D.J."/>
            <person name="Wilmer T.E."/>
            <person name="Wood J.M."/>
            <person name="Wray P.W."/>
            <person name="Wyatt J.C."/>
            <person name="Young L."/>
            <person name="Younger R.M."/>
            <person name="Bentley D.R."/>
            <person name="Coulson A."/>
            <person name="Durbin R.M."/>
            <person name="Hubbard T."/>
            <person name="Sulston J.E."/>
            <person name="Dunham I."/>
            <person name="Rogers J."/>
            <person name="Beck S."/>
        </authorList>
    </citation>
    <scope>NUCLEOTIDE SEQUENCE [LARGE SCALE GENOMIC DNA]</scope>
</reference>
<reference key="4">
    <citation type="journal article" date="2004" name="Genome Res.">
        <title>The status, quality, and expansion of the NIH full-length cDNA project: the Mammalian Gene Collection (MGC).</title>
        <authorList>
            <consortium name="The MGC Project Team"/>
        </authorList>
    </citation>
    <scope>NUCLEOTIDE SEQUENCE [LARGE SCALE MRNA] (ISOFORMS 1 AND 2)</scope>
    <scope>VARIANTS GLU-67; THR-521 AND SER-778</scope>
    <source>
        <tissue>Bone marrow</tissue>
        <tissue>Brain cortex</tissue>
    </source>
</reference>
<reference key="5">
    <citation type="journal article" date="2013" name="J. Proteome Res.">
        <title>Toward a comprehensive characterization of a human cancer cell phosphoproteome.</title>
        <authorList>
            <person name="Zhou H."/>
            <person name="Di Palma S."/>
            <person name="Preisinger C."/>
            <person name="Peng M."/>
            <person name="Polat A.N."/>
            <person name="Heck A.J."/>
            <person name="Mohammed S."/>
        </authorList>
    </citation>
    <scope>IDENTIFICATION BY MASS SPECTROMETRY [LARGE SCALE ANALYSIS]</scope>
    <source>
        <tissue>Erythroleukemia</tissue>
    </source>
</reference>
<reference key="6">
    <citation type="journal article" date="2015" name="EMBO J.">
        <title>USP45 deubiquitylase controls ERCC1-XPF endonuclease-mediated DNA damage responses.</title>
        <authorList>
            <person name="Perez-Oliva A.B."/>
            <person name="Lachaud C."/>
            <person name="Szyniarowski P."/>
            <person name="Munoz I."/>
            <person name="Macartney T."/>
            <person name="Hickson I."/>
            <person name="Rouse J."/>
            <person name="Alessi D.R."/>
        </authorList>
    </citation>
    <scope>FUNCTION</scope>
    <scope>CATALYTIC ACTIVITY</scope>
    <scope>SUBCELLULAR LOCATION</scope>
    <scope>INTERACTION WITH ERCC1</scope>
    <scope>MUTAGENESIS OF ASP-25; GLU-26; ASP-27; THR-37 AND CYS-199</scope>
</reference>
<reference key="7">
    <citation type="journal article" date="2018" name="Sci. Rep.">
        <title>USP45 and Spindly are part of the same complex implicated in cell migration.</title>
        <authorList>
            <person name="Conte C."/>
            <person name="Griffis E.R."/>
            <person name="Hickson I."/>
            <person name="Perez-Oliva A.B."/>
        </authorList>
    </citation>
    <scope>FUNCTION</scope>
    <scope>CATALYTIC ACTIVITY</scope>
    <scope>INTERACTION WITH SPDL1</scope>
    <scope>MUTAGENESIS OF CYS-199</scope>
</reference>
<reference key="8">
    <citation type="journal article" date="2019" name="J. Med. Genet.">
        <title>Biallelic mutations in USP45, encoding a deubiquitinating enzyme, are associated with Leber congenital amaurosis.</title>
        <authorList>
            <person name="Yi Z."/>
            <person name="Ouyang J."/>
            <person name="Sun W."/>
            <person name="Xiao X."/>
            <person name="Li S."/>
            <person name="Jia X."/>
            <person name="Wang P."/>
            <person name="Zhang Q."/>
        </authorList>
    </citation>
    <scope>FUNCTION</scope>
    <scope>TISSUE SPECIFICITY</scope>
    <scope>SUBCELLULAR LOCATION</scope>
    <scope>INVOLVEMENT IN LCA19</scope>
    <scope>VARIANTS LCA19 GLN-312 AND 546-LYS--LEU-814 DEL</scope>
</reference>
<accession>Q70EL2</accession>
<accession>B2RXG0</accession>
<accession>Q5T062</accession>
<accession>Q86T44</accession>
<accession>Q86TC0</accession>
<accession>Q9BRU1</accession>